<feature type="chain" id="PRO_0000169290" description="Uncharacterized protein YpjJ">
    <location>
        <begin position="1"/>
        <end position="66"/>
    </location>
</feature>
<protein>
    <recommendedName>
        <fullName>Uncharacterized protein YpjJ</fullName>
    </recommendedName>
</protein>
<name>YPJJ_ECOLI</name>
<dbReference type="EMBL" id="U00096">
    <property type="protein sequence ID" value="ABD18698.1"/>
    <property type="molecule type" value="Genomic_DNA"/>
</dbReference>
<dbReference type="EMBL" id="AP009048">
    <property type="protein sequence ID" value="BAE76773.1"/>
    <property type="molecule type" value="Genomic_DNA"/>
</dbReference>
<dbReference type="RefSeq" id="WP_001395452.1">
    <property type="nucleotide sequence ID" value="NZ_LN832404.1"/>
</dbReference>
<dbReference type="RefSeq" id="YP_588466.1">
    <property type="nucleotide sequence ID" value="NC_000913.3"/>
</dbReference>
<dbReference type="BioGRID" id="4262251">
    <property type="interactions" value="7"/>
</dbReference>
<dbReference type="FunCoup" id="P58033">
    <property type="interactions" value="25"/>
</dbReference>
<dbReference type="STRING" id="511145.b4548"/>
<dbReference type="PaxDb" id="511145-b4548"/>
<dbReference type="EnsemblBacteria" id="ABD18698">
    <property type="protein sequence ID" value="ABD18698"/>
    <property type="gene ID" value="b4548"/>
</dbReference>
<dbReference type="GeneID" id="1450287"/>
<dbReference type="KEGG" id="ecj:JW5421"/>
<dbReference type="KEGG" id="eco:b4548"/>
<dbReference type="PATRIC" id="fig|511145.12.peg.2740"/>
<dbReference type="HOGENOM" id="CLU_201031_0_0_6"/>
<dbReference type="InParanoid" id="P58033"/>
<dbReference type="OMA" id="MTIYRQY"/>
<dbReference type="OrthoDB" id="6428729at2"/>
<dbReference type="PhylomeDB" id="P58033"/>
<dbReference type="BioCyc" id="EcoCyc:MONOMER0-2686"/>
<dbReference type="PRO" id="PR:P58033"/>
<dbReference type="Proteomes" id="UP000000625">
    <property type="component" value="Chromosome"/>
</dbReference>
<dbReference type="InterPro" id="IPR009329">
    <property type="entry name" value="DUF987"/>
</dbReference>
<dbReference type="Pfam" id="PF06174">
    <property type="entry name" value="DUF987"/>
    <property type="match status" value="1"/>
</dbReference>
<gene>
    <name type="primary">ypjJ</name>
    <name type="ordered locus">b4548</name>
    <name type="ordered locus">JW5421</name>
</gene>
<comment type="similarity">
    <text evidence="1">Belongs to the YeeT/YkfH/YpjJ family.</text>
</comment>
<accession>P58033</accession>
<accession>Q2EET3</accession>
<accession>Q2MAD3</accession>
<sequence length="66" mass="7861">MRIISKRRAMTIYRQHPESRIFRYCTGKYQWHGSVCHYTGRDVPDITGVLAVYAERRRTAADRMLD</sequence>
<evidence type="ECO:0000305" key="1"/>
<proteinExistence type="inferred from homology"/>
<reference key="1">
    <citation type="journal article" date="1997" name="Science">
        <title>The complete genome sequence of Escherichia coli K-12.</title>
        <authorList>
            <person name="Blattner F.R."/>
            <person name="Plunkett G. III"/>
            <person name="Bloch C.A."/>
            <person name="Perna N.T."/>
            <person name="Burland V."/>
            <person name="Riley M."/>
            <person name="Collado-Vides J."/>
            <person name="Glasner J.D."/>
            <person name="Rode C.K."/>
            <person name="Mayhew G.F."/>
            <person name="Gregor J."/>
            <person name="Davis N.W."/>
            <person name="Kirkpatrick H.A."/>
            <person name="Goeden M.A."/>
            <person name="Rose D.J."/>
            <person name="Mau B."/>
            <person name="Shao Y."/>
        </authorList>
    </citation>
    <scope>NUCLEOTIDE SEQUENCE [LARGE SCALE GENOMIC DNA]</scope>
    <source>
        <strain>K12 / MG1655 / ATCC 47076</strain>
    </source>
</reference>
<reference key="2">
    <citation type="journal article" date="2006" name="Mol. Syst. Biol.">
        <title>Highly accurate genome sequences of Escherichia coli K-12 strains MG1655 and W3110.</title>
        <authorList>
            <person name="Hayashi K."/>
            <person name="Morooka N."/>
            <person name="Yamamoto Y."/>
            <person name="Fujita K."/>
            <person name="Isono K."/>
            <person name="Choi S."/>
            <person name="Ohtsubo E."/>
            <person name="Baba T."/>
            <person name="Wanner B.L."/>
            <person name="Mori H."/>
            <person name="Horiuchi T."/>
        </authorList>
    </citation>
    <scope>NUCLEOTIDE SEQUENCE [LARGE SCALE GENOMIC DNA]</scope>
    <source>
        <strain>K12 / W3110 / ATCC 27325 / DSM 5911</strain>
    </source>
</reference>
<keyword id="KW-1185">Reference proteome</keyword>
<organism>
    <name type="scientific">Escherichia coli (strain K12)</name>
    <dbReference type="NCBI Taxonomy" id="83333"/>
    <lineage>
        <taxon>Bacteria</taxon>
        <taxon>Pseudomonadati</taxon>
        <taxon>Pseudomonadota</taxon>
        <taxon>Gammaproteobacteria</taxon>
        <taxon>Enterobacterales</taxon>
        <taxon>Enterobacteriaceae</taxon>
        <taxon>Escherichia</taxon>
    </lineage>
</organism>